<sequence>MYQDLIRNELNEAAETLANFLKDDANIHAIQRAAVLLADSFKAGGKVLSCGNGGSHCDAMHFAEELTGRYRENRPGYPAIAISDVSHISCVSNDFGYDYIFSRYVEAVGREGDVLLGISTSGNSGNVIKAIAAAREKGMKVITLTGKDGGKMAGTADIEIRVPHFGYADRIQEIHIKVIHILIQLIEKEMVK</sequence>
<accession>B4TYM6</accession>
<gene>
    <name evidence="1" type="primary">gmhA</name>
    <name type="ordered locus">SeSA_A0359</name>
</gene>
<name>GMHA_SALSV</name>
<feature type="chain" id="PRO_1000092293" description="Phosphoheptose isomerase">
    <location>
        <begin position="1"/>
        <end position="192"/>
    </location>
</feature>
<feature type="domain" description="SIS" evidence="1">
    <location>
        <begin position="37"/>
        <end position="192"/>
    </location>
</feature>
<feature type="binding site" evidence="1">
    <location>
        <begin position="52"/>
        <end position="54"/>
    </location>
    <ligand>
        <name>substrate</name>
    </ligand>
</feature>
<feature type="binding site" evidence="1">
    <location>
        <position position="61"/>
    </location>
    <ligand>
        <name>Zn(2+)</name>
        <dbReference type="ChEBI" id="CHEBI:29105"/>
    </ligand>
</feature>
<feature type="binding site" evidence="1">
    <location>
        <position position="65"/>
    </location>
    <ligand>
        <name>substrate</name>
    </ligand>
</feature>
<feature type="binding site" evidence="1">
    <location>
        <position position="65"/>
    </location>
    <ligand>
        <name>Zn(2+)</name>
        <dbReference type="ChEBI" id="CHEBI:29105"/>
    </ligand>
</feature>
<feature type="binding site" evidence="1">
    <location>
        <begin position="93"/>
        <end position="94"/>
    </location>
    <ligand>
        <name>substrate</name>
    </ligand>
</feature>
<feature type="binding site" evidence="1">
    <location>
        <begin position="119"/>
        <end position="121"/>
    </location>
    <ligand>
        <name>substrate</name>
    </ligand>
</feature>
<feature type="binding site" evidence="1">
    <location>
        <position position="124"/>
    </location>
    <ligand>
        <name>substrate</name>
    </ligand>
</feature>
<feature type="binding site" evidence="1">
    <location>
        <position position="172"/>
    </location>
    <ligand>
        <name>substrate</name>
    </ligand>
</feature>
<feature type="binding site" evidence="1">
    <location>
        <position position="172"/>
    </location>
    <ligand>
        <name>Zn(2+)</name>
        <dbReference type="ChEBI" id="CHEBI:29105"/>
    </ligand>
</feature>
<feature type="binding site" evidence="1">
    <location>
        <position position="180"/>
    </location>
    <ligand>
        <name>Zn(2+)</name>
        <dbReference type="ChEBI" id="CHEBI:29105"/>
    </ligand>
</feature>
<organism>
    <name type="scientific">Salmonella schwarzengrund (strain CVM19633)</name>
    <dbReference type="NCBI Taxonomy" id="439843"/>
    <lineage>
        <taxon>Bacteria</taxon>
        <taxon>Pseudomonadati</taxon>
        <taxon>Pseudomonadota</taxon>
        <taxon>Gammaproteobacteria</taxon>
        <taxon>Enterobacterales</taxon>
        <taxon>Enterobacteriaceae</taxon>
        <taxon>Salmonella</taxon>
    </lineage>
</organism>
<reference key="1">
    <citation type="journal article" date="2011" name="J. Bacteriol.">
        <title>Comparative genomics of 28 Salmonella enterica isolates: evidence for CRISPR-mediated adaptive sublineage evolution.</title>
        <authorList>
            <person name="Fricke W.F."/>
            <person name="Mammel M.K."/>
            <person name="McDermott P.F."/>
            <person name="Tartera C."/>
            <person name="White D.G."/>
            <person name="Leclerc J.E."/>
            <person name="Ravel J."/>
            <person name="Cebula T.A."/>
        </authorList>
    </citation>
    <scope>NUCLEOTIDE SEQUENCE [LARGE SCALE GENOMIC DNA]</scope>
    <source>
        <strain>CVM19633</strain>
    </source>
</reference>
<evidence type="ECO:0000255" key="1">
    <source>
        <dbReference type="HAMAP-Rule" id="MF_00067"/>
    </source>
</evidence>
<proteinExistence type="inferred from homology"/>
<dbReference type="EC" id="5.3.1.28" evidence="1"/>
<dbReference type="EMBL" id="CP001127">
    <property type="protein sequence ID" value="ACF91413.1"/>
    <property type="molecule type" value="Genomic_DNA"/>
</dbReference>
<dbReference type="SMR" id="B4TYM6"/>
<dbReference type="KEGG" id="sew:SeSA_A0359"/>
<dbReference type="HOGENOM" id="CLU_080999_4_0_6"/>
<dbReference type="UniPathway" id="UPA00041">
    <property type="reaction ID" value="UER00436"/>
</dbReference>
<dbReference type="Proteomes" id="UP000001865">
    <property type="component" value="Chromosome"/>
</dbReference>
<dbReference type="GO" id="GO:0005737">
    <property type="term" value="C:cytoplasm"/>
    <property type="evidence" value="ECO:0007669"/>
    <property type="project" value="UniProtKB-SubCell"/>
</dbReference>
<dbReference type="GO" id="GO:0097367">
    <property type="term" value="F:carbohydrate derivative binding"/>
    <property type="evidence" value="ECO:0007669"/>
    <property type="project" value="InterPro"/>
</dbReference>
<dbReference type="GO" id="GO:0008968">
    <property type="term" value="F:D-sedoheptulose 7-phosphate isomerase activity"/>
    <property type="evidence" value="ECO:0007669"/>
    <property type="project" value="UniProtKB-UniRule"/>
</dbReference>
<dbReference type="GO" id="GO:0008270">
    <property type="term" value="F:zinc ion binding"/>
    <property type="evidence" value="ECO:0007669"/>
    <property type="project" value="UniProtKB-UniRule"/>
</dbReference>
<dbReference type="GO" id="GO:0005975">
    <property type="term" value="P:carbohydrate metabolic process"/>
    <property type="evidence" value="ECO:0007669"/>
    <property type="project" value="UniProtKB-UniRule"/>
</dbReference>
<dbReference type="GO" id="GO:2001061">
    <property type="term" value="P:D-glycero-D-manno-heptose 7-phosphate biosynthetic process"/>
    <property type="evidence" value="ECO:0007669"/>
    <property type="project" value="UniProtKB-UniPathway"/>
</dbReference>
<dbReference type="CDD" id="cd05006">
    <property type="entry name" value="SIS_GmhA"/>
    <property type="match status" value="1"/>
</dbReference>
<dbReference type="FunFam" id="3.40.50.10490:FF:000013">
    <property type="entry name" value="Phosphoheptose isomerase"/>
    <property type="match status" value="1"/>
</dbReference>
<dbReference type="Gene3D" id="3.40.50.10490">
    <property type="entry name" value="Glucose-6-phosphate isomerase like protein, domain 1"/>
    <property type="match status" value="1"/>
</dbReference>
<dbReference type="HAMAP" id="MF_00067">
    <property type="entry name" value="GmhA"/>
    <property type="match status" value="1"/>
</dbReference>
<dbReference type="InterPro" id="IPR035461">
    <property type="entry name" value="GmhA/DiaA"/>
</dbReference>
<dbReference type="InterPro" id="IPR004515">
    <property type="entry name" value="Phosphoheptose_Isoase"/>
</dbReference>
<dbReference type="InterPro" id="IPR001347">
    <property type="entry name" value="SIS_dom"/>
</dbReference>
<dbReference type="InterPro" id="IPR046348">
    <property type="entry name" value="SIS_dom_sf"/>
</dbReference>
<dbReference type="InterPro" id="IPR050099">
    <property type="entry name" value="SIS_GmhA/DiaA_subfam"/>
</dbReference>
<dbReference type="NCBIfam" id="TIGR00441">
    <property type="entry name" value="gmhA"/>
    <property type="match status" value="1"/>
</dbReference>
<dbReference type="NCBIfam" id="NF001628">
    <property type="entry name" value="PRK00414.1"/>
    <property type="match status" value="1"/>
</dbReference>
<dbReference type="PANTHER" id="PTHR30390:SF7">
    <property type="entry name" value="PHOSPHOHEPTOSE ISOMERASE"/>
    <property type="match status" value="1"/>
</dbReference>
<dbReference type="PANTHER" id="PTHR30390">
    <property type="entry name" value="SEDOHEPTULOSE 7-PHOSPHATE ISOMERASE / DNAA INITIATOR-ASSOCIATING FACTOR FOR REPLICATION INITIATION"/>
    <property type="match status" value="1"/>
</dbReference>
<dbReference type="Pfam" id="PF13580">
    <property type="entry name" value="SIS_2"/>
    <property type="match status" value="1"/>
</dbReference>
<dbReference type="SUPFAM" id="SSF53697">
    <property type="entry name" value="SIS domain"/>
    <property type="match status" value="1"/>
</dbReference>
<dbReference type="PROSITE" id="PS51464">
    <property type="entry name" value="SIS"/>
    <property type="match status" value="1"/>
</dbReference>
<protein>
    <recommendedName>
        <fullName evidence="1">Phosphoheptose isomerase</fullName>
        <ecNumber evidence="1">5.3.1.28</ecNumber>
    </recommendedName>
    <alternativeName>
        <fullName evidence="1">Sedoheptulose 7-phosphate isomerase</fullName>
    </alternativeName>
</protein>
<keyword id="KW-0119">Carbohydrate metabolism</keyword>
<keyword id="KW-0963">Cytoplasm</keyword>
<keyword id="KW-0413">Isomerase</keyword>
<keyword id="KW-0479">Metal-binding</keyword>
<keyword id="KW-0862">Zinc</keyword>
<comment type="function">
    <text evidence="1">Catalyzes the isomerization of sedoheptulose 7-phosphate in D-glycero-D-manno-heptose 7-phosphate.</text>
</comment>
<comment type="catalytic activity">
    <reaction evidence="1">
        <text>2 D-sedoheptulose 7-phosphate = D-glycero-alpha-D-manno-heptose 7-phosphate + D-glycero-beta-D-manno-heptose 7-phosphate</text>
        <dbReference type="Rhea" id="RHEA:27489"/>
        <dbReference type="ChEBI" id="CHEBI:57483"/>
        <dbReference type="ChEBI" id="CHEBI:60203"/>
        <dbReference type="ChEBI" id="CHEBI:60204"/>
        <dbReference type="EC" id="5.3.1.28"/>
    </reaction>
</comment>
<comment type="cofactor">
    <cofactor evidence="1">
        <name>Zn(2+)</name>
        <dbReference type="ChEBI" id="CHEBI:29105"/>
    </cofactor>
    <text evidence="1">Binds 1 zinc ion per subunit.</text>
</comment>
<comment type="pathway">
    <text evidence="1">Carbohydrate biosynthesis; D-glycero-D-manno-heptose 7-phosphate biosynthesis; D-glycero-alpha-D-manno-heptose 7-phosphate and D-glycero-beta-D-manno-heptose 7-phosphate from sedoheptulose 7-phosphate: step 1/1.</text>
</comment>
<comment type="subunit">
    <text evidence="1">Homotetramer.</text>
</comment>
<comment type="subcellular location">
    <subcellularLocation>
        <location evidence="1">Cytoplasm</location>
    </subcellularLocation>
</comment>
<comment type="miscellaneous">
    <text evidence="1">The reaction produces a racemic mixture of D-glycero-alpha-D-manno-heptose 7-phosphate and D-glycero-beta-D-manno-heptose 7-phosphate.</text>
</comment>
<comment type="similarity">
    <text evidence="1">Belongs to the SIS family. GmhA subfamily.</text>
</comment>